<proteinExistence type="evidence at protein level"/>
<evidence type="ECO:0000250" key="1">
    <source>
        <dbReference type="UniProtKB" id="Q80U30"/>
    </source>
</evidence>
<evidence type="ECO:0000255" key="2"/>
<evidence type="ECO:0000256" key="3">
    <source>
        <dbReference type="SAM" id="MobiDB-lite"/>
    </source>
</evidence>
<evidence type="ECO:0000269" key="4">
    <source>
    </source>
</evidence>
<evidence type="ECO:0000269" key="5">
    <source>
    </source>
</evidence>
<evidence type="ECO:0000303" key="6">
    <source>
    </source>
</evidence>
<evidence type="ECO:0000303" key="7">
    <source>
    </source>
</evidence>
<evidence type="ECO:0000305" key="8"/>
<evidence type="ECO:0000312" key="9">
    <source>
        <dbReference type="HGNC" id="HGNC:29013"/>
    </source>
</evidence>
<name>CL16A_HUMAN</name>
<keyword id="KW-0025">Alternative splicing</keyword>
<keyword id="KW-0072">Autophagy</keyword>
<keyword id="KW-0219">Diabetes mellitus</keyword>
<keyword id="KW-0967">Endosome</keyword>
<keyword id="KW-0458">Lysosome</keyword>
<keyword id="KW-0472">Membrane</keyword>
<keyword id="KW-1267">Proteomics identification</keyword>
<keyword id="KW-1185">Reference proteome</keyword>
<reference key="1">
    <citation type="journal article" date="1997" name="DNA Res.">
        <title>Prediction of the coding sequences of unidentified human genes. VII. The complete sequences of 100 new cDNA clones from brain which can code for large proteins in vitro.</title>
        <authorList>
            <person name="Nagase T."/>
            <person name="Ishikawa K."/>
            <person name="Nakajima D."/>
            <person name="Ohira M."/>
            <person name="Seki N."/>
            <person name="Miyajima N."/>
            <person name="Tanaka A."/>
            <person name="Kotani H."/>
            <person name="Nomura N."/>
            <person name="Ohara O."/>
        </authorList>
    </citation>
    <scope>NUCLEOTIDE SEQUENCE [LARGE SCALE MRNA] (ISOFORM 1)</scope>
    <source>
        <tissue>Brain</tissue>
    </source>
</reference>
<reference key="2">
    <citation type="journal article" date="2002" name="DNA Res.">
        <title>Construction of expression-ready cDNA clones for KIAA genes: manual curation of 330 KIAA cDNA clones.</title>
        <authorList>
            <person name="Nakajima D."/>
            <person name="Okazaki N."/>
            <person name="Yamakawa H."/>
            <person name="Kikuno R."/>
            <person name="Ohara O."/>
            <person name="Nagase T."/>
        </authorList>
    </citation>
    <scope>SEQUENCE REVISION</scope>
</reference>
<reference key="3">
    <citation type="journal article" date="2004" name="Nat. Genet.">
        <title>Complete sequencing and characterization of 21,243 full-length human cDNAs.</title>
        <authorList>
            <person name="Ota T."/>
            <person name="Suzuki Y."/>
            <person name="Nishikawa T."/>
            <person name="Otsuki T."/>
            <person name="Sugiyama T."/>
            <person name="Irie R."/>
            <person name="Wakamatsu A."/>
            <person name="Hayashi K."/>
            <person name="Sato H."/>
            <person name="Nagai K."/>
            <person name="Kimura K."/>
            <person name="Makita H."/>
            <person name="Sekine M."/>
            <person name="Obayashi M."/>
            <person name="Nishi T."/>
            <person name="Shibahara T."/>
            <person name="Tanaka T."/>
            <person name="Ishii S."/>
            <person name="Yamamoto J."/>
            <person name="Saito K."/>
            <person name="Kawai Y."/>
            <person name="Isono Y."/>
            <person name="Nakamura Y."/>
            <person name="Nagahari K."/>
            <person name="Murakami K."/>
            <person name="Yasuda T."/>
            <person name="Iwayanagi T."/>
            <person name="Wagatsuma M."/>
            <person name="Shiratori A."/>
            <person name="Sudo H."/>
            <person name="Hosoiri T."/>
            <person name="Kaku Y."/>
            <person name="Kodaira H."/>
            <person name="Kondo H."/>
            <person name="Sugawara M."/>
            <person name="Takahashi M."/>
            <person name="Kanda K."/>
            <person name="Yokoi T."/>
            <person name="Furuya T."/>
            <person name="Kikkawa E."/>
            <person name="Omura Y."/>
            <person name="Abe K."/>
            <person name="Kamihara K."/>
            <person name="Katsuta N."/>
            <person name="Sato K."/>
            <person name="Tanikawa M."/>
            <person name="Yamazaki M."/>
            <person name="Ninomiya K."/>
            <person name="Ishibashi T."/>
            <person name="Yamashita H."/>
            <person name="Murakawa K."/>
            <person name="Fujimori K."/>
            <person name="Tanai H."/>
            <person name="Kimata M."/>
            <person name="Watanabe M."/>
            <person name="Hiraoka S."/>
            <person name="Chiba Y."/>
            <person name="Ishida S."/>
            <person name="Ono Y."/>
            <person name="Takiguchi S."/>
            <person name="Watanabe S."/>
            <person name="Yosida M."/>
            <person name="Hotuta T."/>
            <person name="Kusano J."/>
            <person name="Kanehori K."/>
            <person name="Takahashi-Fujii A."/>
            <person name="Hara H."/>
            <person name="Tanase T.-O."/>
            <person name="Nomura Y."/>
            <person name="Togiya S."/>
            <person name="Komai F."/>
            <person name="Hara R."/>
            <person name="Takeuchi K."/>
            <person name="Arita M."/>
            <person name="Imose N."/>
            <person name="Musashino K."/>
            <person name="Yuuki H."/>
            <person name="Oshima A."/>
            <person name="Sasaki N."/>
            <person name="Aotsuka S."/>
            <person name="Yoshikawa Y."/>
            <person name="Matsunawa H."/>
            <person name="Ichihara T."/>
            <person name="Shiohata N."/>
            <person name="Sano S."/>
            <person name="Moriya S."/>
            <person name="Momiyama H."/>
            <person name="Satoh N."/>
            <person name="Takami S."/>
            <person name="Terashima Y."/>
            <person name="Suzuki O."/>
            <person name="Nakagawa S."/>
            <person name="Senoh A."/>
            <person name="Mizoguchi H."/>
            <person name="Goto Y."/>
            <person name="Shimizu F."/>
            <person name="Wakebe H."/>
            <person name="Hishigaki H."/>
            <person name="Watanabe T."/>
            <person name="Sugiyama A."/>
            <person name="Takemoto M."/>
            <person name="Kawakami B."/>
            <person name="Yamazaki M."/>
            <person name="Watanabe K."/>
            <person name="Kumagai A."/>
            <person name="Itakura S."/>
            <person name="Fukuzumi Y."/>
            <person name="Fujimori Y."/>
            <person name="Komiyama M."/>
            <person name="Tashiro H."/>
            <person name="Tanigami A."/>
            <person name="Fujiwara T."/>
            <person name="Ono T."/>
            <person name="Yamada K."/>
            <person name="Fujii Y."/>
            <person name="Ozaki K."/>
            <person name="Hirao M."/>
            <person name="Ohmori Y."/>
            <person name="Kawabata A."/>
            <person name="Hikiji T."/>
            <person name="Kobatake N."/>
            <person name="Inagaki H."/>
            <person name="Ikema Y."/>
            <person name="Okamoto S."/>
            <person name="Okitani R."/>
            <person name="Kawakami T."/>
            <person name="Noguchi S."/>
            <person name="Itoh T."/>
            <person name="Shigeta K."/>
            <person name="Senba T."/>
            <person name="Matsumura K."/>
            <person name="Nakajima Y."/>
            <person name="Mizuno T."/>
            <person name="Morinaga M."/>
            <person name="Sasaki M."/>
            <person name="Togashi T."/>
            <person name="Oyama M."/>
            <person name="Hata H."/>
            <person name="Watanabe M."/>
            <person name="Komatsu T."/>
            <person name="Mizushima-Sugano J."/>
            <person name="Satoh T."/>
            <person name="Shirai Y."/>
            <person name="Takahashi Y."/>
            <person name="Nakagawa K."/>
            <person name="Okumura K."/>
            <person name="Nagase T."/>
            <person name="Nomura N."/>
            <person name="Kikuchi H."/>
            <person name="Masuho Y."/>
            <person name="Yamashita R."/>
            <person name="Nakai K."/>
            <person name="Yada T."/>
            <person name="Nakamura Y."/>
            <person name="Ohara O."/>
            <person name="Isogai T."/>
            <person name="Sugano S."/>
        </authorList>
    </citation>
    <scope>NUCLEOTIDE SEQUENCE [LARGE SCALE MRNA] (ISOFORM 3)</scope>
    <source>
        <tissue>Cerebellum</tissue>
    </source>
</reference>
<reference key="4">
    <citation type="journal article" date="2004" name="Genome Res.">
        <title>The status, quality, and expansion of the NIH full-length cDNA project: the Mammalian Gene Collection (MGC).</title>
        <authorList>
            <consortium name="The MGC Project Team"/>
        </authorList>
    </citation>
    <scope>NUCLEOTIDE SEQUENCE [LARGE SCALE MRNA] (ISOFORM 2)</scope>
    <source>
        <tissue>Lymph</tissue>
    </source>
</reference>
<reference key="5">
    <citation type="journal article" date="2007" name="Nature">
        <title>A genome-wide association study identifies KIAA0350 as a type 1 diabetes gene.</title>
        <authorList>
            <person name="Hakonarson H."/>
            <person name="Grant S.F.A."/>
            <person name="Bradfield J.P."/>
            <person name="Marchand L."/>
            <person name="Kim C.E."/>
            <person name="Glessner J.T."/>
            <person name="Grabs R."/>
            <person name="Casalunovo T."/>
            <person name="Taback S.P."/>
            <person name="Frackelton E.C."/>
            <person name="Lawson M.L."/>
            <person name="Robinson L.J."/>
            <person name="Skraban R."/>
            <person name="Lu Y."/>
            <person name="Chiavacci R.M."/>
            <person name="Stanley C.A."/>
            <person name="Kirsch S.E."/>
            <person name="Rappaport E.F."/>
            <person name="Orange J.S."/>
            <person name="Monos D.S."/>
            <person name="Devoto M."/>
            <person name="Qu H.-Q."/>
            <person name="Polychronakos C."/>
        </authorList>
    </citation>
    <scope>INVOLVEMENT IN T1D</scope>
    <scope>TISSUE SPECIFICITY</scope>
</reference>
<reference key="6">
    <citation type="journal article" date="2013" name="J. Proteome Res.">
        <title>Toward a comprehensive characterization of a human cancer cell phosphoproteome.</title>
        <authorList>
            <person name="Zhou H."/>
            <person name="Di Palma S."/>
            <person name="Preisinger C."/>
            <person name="Peng M."/>
            <person name="Polat A.N."/>
            <person name="Heck A.J."/>
            <person name="Mohammed S."/>
        </authorList>
    </citation>
    <scope>IDENTIFICATION BY MASS SPECTROMETRY [LARGE SCALE ANALYSIS]</scope>
    <source>
        <tissue>Cervix carcinoma</tissue>
        <tissue>Erythroleukemia</tissue>
    </source>
</reference>
<reference key="7">
    <citation type="journal article" date="2014" name="Cell">
        <title>The diabetes susceptibility gene Clec16a regulates mitophagy.</title>
        <authorList>
            <person name="Soleimanpour S.A."/>
            <person name="Gupta A."/>
            <person name="Bakay M."/>
            <person name="Ferrari A.M."/>
            <person name="Groff D.N."/>
            <person name="Fadista J."/>
            <person name="Spruce L.A."/>
            <person name="Kushner J.A."/>
            <person name="Groop L."/>
            <person name="Seeholzer S.H."/>
            <person name="Kaufman B.A."/>
            <person name="Hakonarson H."/>
            <person name="Stoffers D.A."/>
        </authorList>
    </citation>
    <scope>FUNCTION</scope>
    <scope>SUBCELLULAR LOCATION</scope>
    <scope>INVOLVEMENT IN T1D</scope>
</reference>
<comment type="function">
    <text evidence="5">Regulator of mitophagy through the upstream regulation of the RNF41/NRDP1-PRKN pathway. Mitophagy is a selective form of autophagy necessary for mitochondrial quality control. The RNF41/NRDP1-PRKN pathway regulates autophagosome-lysosome fusion during late mitophagy. May protect RNF41/NRDP1 from proteasomal degradation, RNF41/NRDP1 which regulates proteasomal degradation of PRKN. Plays a key role in beta cells functions by regulating mitophagy/autophagy and mitochondrial health.</text>
</comment>
<comment type="subunit">
    <text evidence="1">Interacts with RNF41/NRDP1.</text>
</comment>
<comment type="interaction">
    <interactant intactId="EBI-48447012">
        <id>Q2KHT3-1</id>
    </interactant>
    <interactant intactId="EBI-719493">
        <id>P14373</id>
        <label>TRIM27</label>
    </interactant>
    <organismsDiffer>false</organismsDiffer>
    <experiments>2</experiments>
</comment>
<comment type="subcellular location">
    <subcellularLocation>
        <location evidence="1">Endosome membrane</location>
        <topology evidence="1">Peripheral membrane protein</topology>
    </subcellularLocation>
    <subcellularLocation>
        <location evidence="1">Lysosome membrane</location>
        <topology evidence="1">Peripheral membrane protein</topology>
    </subcellularLocation>
    <text evidence="1">Associates with the endolysosome membrane.</text>
</comment>
<comment type="alternative products">
    <event type="alternative splicing"/>
    <isoform>
        <id>Q2KHT3-1</id>
        <name>1</name>
        <sequence type="displayed"/>
    </isoform>
    <isoform>
        <id>Q2KHT3-2</id>
        <name>2</name>
        <sequence type="described" ref="VSP_022746 VSP_022747 VSP_022748 VSP_022750"/>
    </isoform>
    <isoform>
        <id>Q2KHT3-3</id>
        <name>3</name>
        <sequence type="described" ref="VSP_022745 VSP_022749"/>
    </isoform>
</comment>
<comment type="tissue specificity">
    <text evidence="4">Almost exclusively expressed in immune cells, including dendritic cells, B-lymphocytes and natural killer cells.</text>
</comment>
<comment type="disease" evidence="4 5">
    <disease id="DI-01826">
        <name>Type 1 diabetes mellitus</name>
        <acronym>T1D</acronym>
        <description>A multifactorial disorder of glucose homeostasis that is characterized by susceptibility to ketoacidosis in the absence of insulin therapy. Clinical features are polydipsia, polyphagia and polyuria which result from hyperglycemia-induced osmotic diuresis and secondary thirst. These derangements result in long-term complications that affect the eyes, kidneys, nerves, and blood vessels.</description>
        <dbReference type="MIM" id="222100"/>
    </disease>
    <text evidence="4 5">Disease susceptibility may be associated with variants affecting the gene represented in this entry. Three common non-coding variants of CLEC16A in strong linkage disequilibrium reach genome-wide significance for association with the disease (PubMed:17632545). The non-coding variant rs12708716 is associated with reduced expression of CLEC16A in beta cells and reduced beta cell function (PubMed:24949970).</text>
</comment>
<comment type="similarity">
    <text evidence="8">Belongs to the CLEC16A/gop-1 family.</text>
</comment>
<comment type="caution">
    <text evidence="8">Despite its name, does not contain a C-type lectin domain.</text>
</comment>
<comment type="sequence caution" evidence="8">
    <conflict type="erroneous initiation">
        <sequence resource="EMBL-CDS" id="BAA20807"/>
    </conflict>
    <text>Extended N-terminus.</text>
</comment>
<feature type="chain" id="PRO_0000274476" description="Protein CLEC16A">
    <location>
        <begin position="1"/>
        <end position="1053"/>
    </location>
</feature>
<feature type="domain" description="FPL" evidence="2">
    <location>
        <begin position="51"/>
        <end position="198"/>
    </location>
</feature>
<feature type="region of interest" description="Disordered" evidence="3">
    <location>
        <begin position="375"/>
        <end position="434"/>
    </location>
</feature>
<feature type="region of interest" description="Disordered" evidence="3">
    <location>
        <begin position="452"/>
        <end position="471"/>
    </location>
</feature>
<feature type="region of interest" description="Disordered" evidence="3">
    <location>
        <begin position="892"/>
        <end position="983"/>
    </location>
</feature>
<feature type="compositionally biased region" description="Basic residues" evidence="3">
    <location>
        <begin position="381"/>
        <end position="392"/>
    </location>
</feature>
<feature type="compositionally biased region" description="Low complexity" evidence="3">
    <location>
        <begin position="892"/>
        <end position="938"/>
    </location>
</feature>
<feature type="splice variant" id="VSP_022745" description="In isoform 3." evidence="6">
    <location>
        <begin position="1"/>
        <end position="913"/>
    </location>
</feature>
<feature type="splice variant" id="VSP_022746" description="In isoform 2." evidence="7">
    <location>
        <begin position="201"/>
        <end position="202"/>
    </location>
</feature>
<feature type="splice variant" id="VSP_022747" description="In isoform 2." evidence="7">
    <location>
        <begin position="419"/>
        <end position="434"/>
    </location>
</feature>
<feature type="splice variant" id="VSP_022748" description="In isoform 2." evidence="7">
    <original>FAVAQCINQHSSPSLSSQSPPSASGSPSGSGSTSHCDSGGTSS</original>
    <variation>EPAPRPAPQLVHHGGRSRSFSLWSLCELPFLSQKPRRLAAPAS</variation>
    <location>
        <begin position="882"/>
        <end position="924"/>
    </location>
</feature>
<feature type="splice variant" id="VSP_022749" description="In isoform 3." evidence="6">
    <original>TSHCDSGGTSSSSTPSTAQSPA</original>
    <variation>MAATGFSAPNGSCHGTSRTVNS</variation>
    <location>
        <begin position="914"/>
        <end position="935"/>
    </location>
</feature>
<feature type="splice variant" id="VSP_022750" description="In isoform 2." evidence="7">
    <location>
        <begin position="925"/>
        <end position="1053"/>
    </location>
</feature>
<feature type="sequence variant" id="VAR_030288" description="In dbSNP:rs2241100.">
    <original>G</original>
    <variation>E</variation>
    <location>
        <position position="906"/>
    </location>
</feature>
<gene>
    <name evidence="9" type="primary">CLEC16A</name>
    <name type="synonym">KIAA0350</name>
</gene>
<protein>
    <recommendedName>
        <fullName evidence="8">Protein CLEC16A</fullName>
    </recommendedName>
    <alternativeName>
        <fullName evidence="9">C-type lectin domain family 16 member A</fullName>
    </alternativeName>
</protein>
<organism>
    <name type="scientific">Homo sapiens</name>
    <name type="common">Human</name>
    <dbReference type="NCBI Taxonomy" id="9606"/>
    <lineage>
        <taxon>Eukaryota</taxon>
        <taxon>Metazoa</taxon>
        <taxon>Chordata</taxon>
        <taxon>Craniata</taxon>
        <taxon>Vertebrata</taxon>
        <taxon>Euteleostomi</taxon>
        <taxon>Mammalia</taxon>
        <taxon>Eutheria</taxon>
        <taxon>Euarchontoglires</taxon>
        <taxon>Primates</taxon>
        <taxon>Haplorrhini</taxon>
        <taxon>Catarrhini</taxon>
        <taxon>Hominidae</taxon>
        <taxon>Homo</taxon>
    </lineage>
</organism>
<accession>Q2KHT3</accession>
<accession>O15058</accession>
<accession>Q6ZTB2</accession>
<sequence>MFGRSRSWVGGGHGKTSRNIHSLDHLKYLYHVLTKNTTVTEQNRNLLVETIRSITEILIWGDQNDSSVFDFFLEKNMFVFFLNILRQKSGRYVCVQLLQTLNILFENISHETSLYYLLSNNYVNSIIVHKFDFSDEEIMAYYISFLKTLSLKLNNHTVHFFYNEHTNDFALYTEAIKFFNHPESMVRIAVRTITLNVYKVSLDNQAMLHYIRDKTAVPYFSNLVWFIGSHVIELDDCVQTDEEHRNRGKLSDLVAEHLDHLHYLNDILIINCEFLNDVLTDHLLNRLFLPLYVYSLENQDKGGERPKISLPVSLYLLSQVFLIIHHAPLVNSLAEVILNGDLSEMYAKTEQDIQRSSAKPSIRCFIKPTETLERSLEMNKHKGKRRVQKRPNYKNVGEEEDEEKGPTEDAQEDAEKAKGTEGGSKGIKTSGESEEIEMVIMERSKLSELAASTSVQEQNTTDEEKSAAATCSESTQWSRPFLDMVYHALDSPDDDYHALFVLCLLYAMSHNKGMDPEKLERIQLPVPNAAEKTTYNHPLAERLIRIMNNAAQPDGKIRLATLELSCLLLKQQVLMSAGCIMKDVHLACLEGAREESVHLVRHFYKGEDIFLDMFEDEYRSMTMKPMNVEYLMMDASILLPPTGTPLTGIDFVKRLPCGDVEKTRRAIRVFFMLRSLSLQLRGEPETQLPLTREEDLIKTDDVLDLNNSDLIACTVITKDGGMVQRFLAVDIYQMSLVEPDVSRLGWGVVKFAGLLQDMQVTGVEDDSRALNITIHKPASSPHSKPFPILQATFIFSDHIRCIIAKQRLAKGRIQARRMKMQRIAALLDLPIQPTTEVLGFGLGSSTSTQHLPFRFYDQGRRGSSDPTVQRSVFASVDKVPGFAVAQCINQHSSPSLSSQSPPSASGSPSGSGSTSHCDSGGTSSSSTPSTAQSPADAPMSPELPKPHLPDQLVIVNETEADSKPSKNVARSAAVETASLSPSLVPARQPTISLLCEDTADTLSVESLTLVPPVDPHSLRSLTGMPPLSTPAAACTEPVGEEAACAEPVGTAED</sequence>
<dbReference type="EMBL" id="AB002348">
    <property type="protein sequence ID" value="BAA20807.3"/>
    <property type="status" value="ALT_INIT"/>
    <property type="molecule type" value="mRNA"/>
</dbReference>
<dbReference type="EMBL" id="AK126771">
    <property type="status" value="NOT_ANNOTATED_CDS"/>
    <property type="molecule type" value="mRNA"/>
</dbReference>
<dbReference type="EMBL" id="BC112897">
    <property type="protein sequence ID" value="AAI12898.1"/>
    <property type="molecule type" value="mRNA"/>
</dbReference>
<dbReference type="CCDS" id="CCDS45409.1">
    <molecule id="Q2KHT3-1"/>
</dbReference>
<dbReference type="CCDS" id="CCDS58423.1">
    <molecule id="Q2KHT3-2"/>
</dbReference>
<dbReference type="RefSeq" id="NP_001230332.1">
    <molecule id="Q2KHT3-2"/>
    <property type="nucleotide sequence ID" value="NM_001243403.2"/>
</dbReference>
<dbReference type="RefSeq" id="NP_056041.1">
    <molecule id="Q2KHT3-1"/>
    <property type="nucleotide sequence ID" value="NM_015226.3"/>
</dbReference>
<dbReference type="BioGRID" id="116875">
    <property type="interactions" value="632"/>
</dbReference>
<dbReference type="FunCoup" id="Q2KHT3">
    <property type="interactions" value="3134"/>
</dbReference>
<dbReference type="IntAct" id="Q2KHT3">
    <property type="interactions" value="18"/>
</dbReference>
<dbReference type="MINT" id="Q2KHT3"/>
<dbReference type="STRING" id="9606.ENSP00000387122"/>
<dbReference type="GlyGen" id="Q2KHT3">
    <property type="glycosylation" value="3 sites, 1 O-linked glycan (1 site)"/>
</dbReference>
<dbReference type="iPTMnet" id="Q2KHT3"/>
<dbReference type="PhosphoSitePlus" id="Q2KHT3"/>
<dbReference type="BioMuta" id="CLEC16A"/>
<dbReference type="DMDM" id="125950459"/>
<dbReference type="jPOST" id="Q2KHT3"/>
<dbReference type="MassIVE" id="Q2KHT3"/>
<dbReference type="PaxDb" id="9606-ENSP00000387122"/>
<dbReference type="PeptideAtlas" id="Q2KHT3"/>
<dbReference type="ProteomicsDB" id="61309">
    <molecule id="Q2KHT3-1"/>
</dbReference>
<dbReference type="ProteomicsDB" id="61310">
    <molecule id="Q2KHT3-2"/>
</dbReference>
<dbReference type="ProteomicsDB" id="61311">
    <molecule id="Q2KHT3-3"/>
</dbReference>
<dbReference type="Pumba" id="Q2KHT3"/>
<dbReference type="Antibodypedia" id="24665">
    <property type="antibodies" value="211 antibodies from 29 providers"/>
</dbReference>
<dbReference type="DNASU" id="23274"/>
<dbReference type="Ensembl" id="ENST00000409552.4">
    <molecule id="Q2KHT3-2"/>
    <property type="protein sequence ID" value="ENSP00000386495.3"/>
    <property type="gene ID" value="ENSG00000038532.17"/>
</dbReference>
<dbReference type="Ensembl" id="ENST00000409790.6">
    <molecule id="Q2KHT3-1"/>
    <property type="protein sequence ID" value="ENSP00000387122.1"/>
    <property type="gene ID" value="ENSG00000038532.17"/>
</dbReference>
<dbReference type="GeneID" id="23274"/>
<dbReference type="KEGG" id="hsa:23274"/>
<dbReference type="MANE-Select" id="ENST00000409790.6">
    <property type="protein sequence ID" value="ENSP00000387122.1"/>
    <property type="RefSeq nucleotide sequence ID" value="NM_015226.3"/>
    <property type="RefSeq protein sequence ID" value="NP_056041.1"/>
</dbReference>
<dbReference type="UCSC" id="uc002dan.5">
    <molecule id="Q2KHT3-1"/>
    <property type="organism name" value="human"/>
</dbReference>
<dbReference type="AGR" id="HGNC:29013"/>
<dbReference type="CTD" id="23274"/>
<dbReference type="DisGeNET" id="23274"/>
<dbReference type="GeneCards" id="CLEC16A"/>
<dbReference type="HGNC" id="HGNC:29013">
    <property type="gene designation" value="CLEC16A"/>
</dbReference>
<dbReference type="HPA" id="ENSG00000038532">
    <property type="expression patterns" value="Low tissue specificity"/>
</dbReference>
<dbReference type="MIM" id="222100">
    <property type="type" value="phenotype"/>
</dbReference>
<dbReference type="MIM" id="611303">
    <property type="type" value="gene"/>
</dbReference>
<dbReference type="neXtProt" id="NX_Q2KHT3"/>
<dbReference type="OpenTargets" id="ENSG00000038532"/>
<dbReference type="PharmGKB" id="PA162382340"/>
<dbReference type="VEuPathDB" id="HostDB:ENSG00000038532"/>
<dbReference type="eggNOG" id="KOG2219">
    <property type="taxonomic scope" value="Eukaryota"/>
</dbReference>
<dbReference type="GeneTree" id="ENSGT00390000013826"/>
<dbReference type="HOGENOM" id="CLU_007413_1_0_1"/>
<dbReference type="InParanoid" id="Q2KHT3"/>
<dbReference type="OMA" id="SMQEQNT"/>
<dbReference type="OrthoDB" id="294052at2759"/>
<dbReference type="PAN-GO" id="Q2KHT3">
    <property type="GO annotations" value="6 GO annotations based on evolutionary models"/>
</dbReference>
<dbReference type="PhylomeDB" id="Q2KHT3"/>
<dbReference type="TreeFam" id="TF314293"/>
<dbReference type="PathwayCommons" id="Q2KHT3"/>
<dbReference type="SignaLink" id="Q2KHT3"/>
<dbReference type="BioGRID-ORCS" id="23274">
    <property type="hits" value="18 hits in 1162 CRISPR screens"/>
</dbReference>
<dbReference type="ChiTaRS" id="CLEC16A">
    <property type="organism name" value="human"/>
</dbReference>
<dbReference type="GeneWiki" id="CLEC16A"/>
<dbReference type="GenomeRNAi" id="23274"/>
<dbReference type="Pharos" id="Q2KHT3">
    <property type="development level" value="Tbio"/>
</dbReference>
<dbReference type="PRO" id="PR:Q2KHT3"/>
<dbReference type="Proteomes" id="UP000005640">
    <property type="component" value="Chromosome 16"/>
</dbReference>
<dbReference type="RNAct" id="Q2KHT3">
    <property type="molecule type" value="protein"/>
</dbReference>
<dbReference type="Bgee" id="ENSG00000038532">
    <property type="expression patterns" value="Expressed in left testis and 140 other cell types or tissues"/>
</dbReference>
<dbReference type="ExpressionAtlas" id="Q2KHT3">
    <property type="expression patterns" value="baseline and differential"/>
</dbReference>
<dbReference type="GO" id="GO:0005829">
    <property type="term" value="C:cytosol"/>
    <property type="evidence" value="ECO:0000314"/>
    <property type="project" value="UniProtKB"/>
</dbReference>
<dbReference type="GO" id="GO:0010008">
    <property type="term" value="C:endosome membrane"/>
    <property type="evidence" value="ECO:0007669"/>
    <property type="project" value="UniProtKB-SubCell"/>
</dbReference>
<dbReference type="GO" id="GO:0005794">
    <property type="term" value="C:Golgi apparatus"/>
    <property type="evidence" value="ECO:0000314"/>
    <property type="project" value="UniProtKB"/>
</dbReference>
<dbReference type="GO" id="GO:0005765">
    <property type="term" value="C:lysosomal membrane"/>
    <property type="evidence" value="ECO:0007669"/>
    <property type="project" value="UniProtKB-SubCell"/>
</dbReference>
<dbReference type="GO" id="GO:0031982">
    <property type="term" value="C:vesicle"/>
    <property type="evidence" value="ECO:0000314"/>
    <property type="project" value="UniProtKB"/>
</dbReference>
<dbReference type="GO" id="GO:0009267">
    <property type="term" value="P:cellular response to starvation"/>
    <property type="evidence" value="ECO:0000315"/>
    <property type="project" value="UniProtKB"/>
</dbReference>
<dbReference type="GO" id="GO:0016197">
    <property type="term" value="P:endosomal transport"/>
    <property type="evidence" value="ECO:0000318"/>
    <property type="project" value="GO_Central"/>
</dbReference>
<dbReference type="GO" id="GO:0000423">
    <property type="term" value="P:mitophagy"/>
    <property type="evidence" value="ECO:0000314"/>
    <property type="project" value="DisProt"/>
</dbReference>
<dbReference type="GO" id="GO:1901097">
    <property type="term" value="P:negative regulation of autophagosome maturation"/>
    <property type="evidence" value="ECO:0000315"/>
    <property type="project" value="UniProtKB"/>
</dbReference>
<dbReference type="GO" id="GO:1904263">
    <property type="term" value="P:positive regulation of TORC1 signaling"/>
    <property type="evidence" value="ECO:0000315"/>
    <property type="project" value="UniProtKB"/>
</dbReference>
<dbReference type="GO" id="GO:1901096">
    <property type="term" value="P:regulation of autophagosome maturation"/>
    <property type="evidence" value="ECO:0000318"/>
    <property type="project" value="GO_Central"/>
</dbReference>
<dbReference type="GO" id="GO:0007034">
    <property type="term" value="P:vacuolar transport"/>
    <property type="evidence" value="ECO:0000318"/>
    <property type="project" value="GO_Central"/>
</dbReference>
<dbReference type="InterPro" id="IPR039272">
    <property type="entry name" value="CLEC16A/TT9"/>
</dbReference>
<dbReference type="InterPro" id="IPR045820">
    <property type="entry name" value="CLEC16A/TT9_C"/>
</dbReference>
<dbReference type="InterPro" id="IPR019155">
    <property type="entry name" value="CLEC16A/TT9_N"/>
</dbReference>
<dbReference type="PANTHER" id="PTHR21481">
    <property type="entry name" value="PROTEIN CLEC16A"/>
    <property type="match status" value="1"/>
</dbReference>
<dbReference type="PANTHER" id="PTHR21481:SF0">
    <property type="entry name" value="PROTEIN CLEC16A"/>
    <property type="match status" value="1"/>
</dbReference>
<dbReference type="Pfam" id="PF19439">
    <property type="entry name" value="CLEC16A_C"/>
    <property type="match status" value="1"/>
</dbReference>
<dbReference type="Pfam" id="PF09758">
    <property type="entry name" value="FPL"/>
    <property type="match status" value="1"/>
</dbReference>